<sequence length="259" mass="28343">AHAWGYGPTDGPDKWVSNFPIADGPRQSPIDILPGGASYDSGLKPLSLKYDPSNCLEILNNGHSFQVTFADDSDSSTLKEGPISGVYRLKQFHFHWGASNDKGSEHTVAGTKYPAELHLVHWNTKYPSFGEAASKPDGLAVVGVFLKIGDANASLQKVLDAFNDIRAKGKQTSFADFDPSTLLPGCLDYWTYDGSLTTPPLLESVTWIVCKEPISVSCEQMAKFRSLLFSAEGEPECCMVDNYRPPQPLKGRHVRASFQ</sequence>
<proteinExistence type="evidence at protein level"/>
<gene>
    <name type="primary">ca1</name>
</gene>
<dbReference type="EC" id="4.2.1.1" evidence="6"/>
<dbReference type="SMR" id="P83299"/>
<dbReference type="iPTMnet" id="P83299"/>
<dbReference type="BRENDA" id="4.2.1.1">
    <property type="organism ID" value="7095"/>
</dbReference>
<dbReference type="GO" id="GO:0005737">
    <property type="term" value="C:cytoplasm"/>
    <property type="evidence" value="ECO:0007669"/>
    <property type="project" value="UniProtKB-SubCell"/>
</dbReference>
<dbReference type="GO" id="GO:0004089">
    <property type="term" value="F:carbonate dehydratase activity"/>
    <property type="evidence" value="ECO:0007669"/>
    <property type="project" value="UniProtKB-EC"/>
</dbReference>
<dbReference type="GO" id="GO:0008270">
    <property type="term" value="F:zinc ion binding"/>
    <property type="evidence" value="ECO:0007669"/>
    <property type="project" value="InterPro"/>
</dbReference>
<dbReference type="GO" id="GO:0015670">
    <property type="term" value="P:carbon dioxide transport"/>
    <property type="evidence" value="ECO:0007669"/>
    <property type="project" value="TreeGrafter"/>
</dbReference>
<dbReference type="GO" id="GO:0006885">
    <property type="term" value="P:regulation of pH"/>
    <property type="evidence" value="ECO:0007669"/>
    <property type="project" value="TreeGrafter"/>
</dbReference>
<dbReference type="FunFam" id="3.10.200.10:FF:000001">
    <property type="entry name" value="Carbonic anhydrase 2"/>
    <property type="match status" value="1"/>
</dbReference>
<dbReference type="Gene3D" id="3.10.200.10">
    <property type="entry name" value="Alpha carbonic anhydrase"/>
    <property type="match status" value="1"/>
</dbReference>
<dbReference type="InterPro" id="IPR001148">
    <property type="entry name" value="CA_dom"/>
</dbReference>
<dbReference type="InterPro" id="IPR036398">
    <property type="entry name" value="CA_dom_sf"/>
</dbReference>
<dbReference type="InterPro" id="IPR023561">
    <property type="entry name" value="Carbonic_anhydrase_a-class"/>
</dbReference>
<dbReference type="InterPro" id="IPR018338">
    <property type="entry name" value="Carbonic_anhydrase_a-class_CS"/>
</dbReference>
<dbReference type="PANTHER" id="PTHR18952">
    <property type="entry name" value="CARBONIC ANHYDRASE"/>
    <property type="match status" value="1"/>
</dbReference>
<dbReference type="PANTHER" id="PTHR18952:SF120">
    <property type="entry name" value="CARBONIC ANHYDRASE 2"/>
    <property type="match status" value="1"/>
</dbReference>
<dbReference type="Pfam" id="PF00194">
    <property type="entry name" value="Carb_anhydrase"/>
    <property type="match status" value="1"/>
</dbReference>
<dbReference type="SMART" id="SM01057">
    <property type="entry name" value="Carb_anhydrase"/>
    <property type="match status" value="1"/>
</dbReference>
<dbReference type="SUPFAM" id="SSF51069">
    <property type="entry name" value="Carbonic anhydrase"/>
    <property type="match status" value="1"/>
</dbReference>
<dbReference type="PROSITE" id="PS00162">
    <property type="entry name" value="ALPHA_CA_1"/>
    <property type="match status" value="1"/>
</dbReference>
<dbReference type="PROSITE" id="PS51144">
    <property type="entry name" value="ALPHA_CA_2"/>
    <property type="match status" value="1"/>
</dbReference>
<name>CAH1_CHIHA</name>
<accession>P83299</accession>
<evidence type="ECO:0000250" key="1">
    <source>
        <dbReference type="UniProtKB" id="P00915"/>
    </source>
</evidence>
<evidence type="ECO:0000250" key="2">
    <source>
        <dbReference type="UniProtKB" id="P00918"/>
    </source>
</evidence>
<evidence type="ECO:0000250" key="3">
    <source>
        <dbReference type="UniProtKB" id="P00921"/>
    </source>
</evidence>
<evidence type="ECO:0000255" key="4"/>
<evidence type="ECO:0000255" key="5">
    <source>
        <dbReference type="PROSITE-ProRule" id="PRU01134"/>
    </source>
</evidence>
<evidence type="ECO:0000269" key="6">
    <source>
    </source>
</evidence>
<reference key="1">
    <citation type="journal article" date="2007" name="Protein J.">
        <title>Biochemical characterization of a S-glutathionylated carbonic anhydrase isolated from gills of the Antarctic icefish Chionodraco hamatus.</title>
        <authorList>
            <person name="Rizzello A."/>
            <person name="Ciardiello M.A."/>
            <person name="Acierno R."/>
            <person name="Carratore V."/>
            <person name="Verri T."/>
            <person name="di Prisco G."/>
            <person name="Storelli C."/>
            <person name="Maffia M."/>
        </authorList>
    </citation>
    <scope>PROTEIN SEQUENCE</scope>
    <scope>FUNCTION</scope>
    <scope>CATALYTIC ACTIVITY</scope>
    <scope>SUBCELLULAR LOCATION</scope>
    <scope>ACETYLATION AT ALA-1</scope>
    <source>
        <tissue>Gill</tissue>
    </source>
</reference>
<organism>
    <name type="scientific">Chionodraco hamatus</name>
    <name type="common">Antarctic teleost icefish</name>
    <name type="synonym">Chaenichthys rhinoceratus hamatus</name>
    <dbReference type="NCBI Taxonomy" id="36188"/>
    <lineage>
        <taxon>Eukaryota</taxon>
        <taxon>Metazoa</taxon>
        <taxon>Chordata</taxon>
        <taxon>Craniata</taxon>
        <taxon>Vertebrata</taxon>
        <taxon>Euteleostomi</taxon>
        <taxon>Actinopterygii</taxon>
        <taxon>Neopterygii</taxon>
        <taxon>Teleostei</taxon>
        <taxon>Neoteleostei</taxon>
        <taxon>Acanthomorphata</taxon>
        <taxon>Eupercaria</taxon>
        <taxon>Perciformes</taxon>
        <taxon>Notothenioidei</taxon>
        <taxon>Channichthyidae</taxon>
        <taxon>Chionodraco</taxon>
    </lineage>
</organism>
<protein>
    <recommendedName>
        <fullName>Carbonic anhydrase 1</fullName>
        <ecNumber evidence="6">4.2.1.1</ecNumber>
    </recommendedName>
    <alternativeName>
        <fullName>Carbonate dehydratase I</fullName>
    </alternativeName>
    <alternativeName>
        <fullName>Carbonic anhydrase I</fullName>
        <shortName>CA-I</shortName>
    </alternativeName>
    <alternativeName>
        <fullName>Ice-CA</fullName>
    </alternativeName>
</protein>
<feature type="chain" id="PRO_0000289146" description="Carbonic anhydrase 1">
    <location>
        <begin position="1"/>
        <end position="259"/>
    </location>
</feature>
<feature type="domain" description="Alpha-carbonic anhydrase" evidence="5">
    <location>
        <begin position="2"/>
        <end position="258"/>
    </location>
</feature>
<feature type="active site" description="Proton donor/acceptor" evidence="2">
    <location>
        <position position="63"/>
    </location>
</feature>
<feature type="binding site" evidence="5">
    <location>
        <position position="93"/>
    </location>
    <ligand>
        <name>Zn(2+)</name>
        <dbReference type="ChEBI" id="CHEBI:29105"/>
        <note>catalytic</note>
    </ligand>
</feature>
<feature type="binding site" evidence="5">
    <location>
        <position position="95"/>
    </location>
    <ligand>
        <name>Zn(2+)</name>
        <dbReference type="ChEBI" id="CHEBI:29105"/>
        <note>catalytic</note>
    </ligand>
</feature>
<feature type="binding site" evidence="5">
    <location>
        <position position="118"/>
    </location>
    <ligand>
        <name>Zn(2+)</name>
        <dbReference type="ChEBI" id="CHEBI:29105"/>
        <note>catalytic</note>
    </ligand>
</feature>
<feature type="binding site" evidence="2">
    <location>
        <begin position="197"/>
        <end position="198"/>
    </location>
    <ligand>
        <name>substrate</name>
    </ligand>
</feature>
<feature type="binding site" evidence="1">
    <location>
        <position position="197"/>
    </location>
    <ligand>
        <name>substrate</name>
    </ligand>
</feature>
<feature type="modified residue" description="N-acetylalanine" evidence="6">
    <location>
        <position position="1"/>
    </location>
</feature>
<keyword id="KW-0007">Acetylation</keyword>
<keyword id="KW-0963">Cytoplasm</keyword>
<keyword id="KW-0903">Direct protein sequencing</keyword>
<keyword id="KW-0456">Lyase</keyword>
<keyword id="KW-0479">Metal-binding</keyword>
<keyword id="KW-0862">Zinc</keyword>
<comment type="function">
    <text evidence="6">Catalyzes the reversible hydration of carbon dioxide.</text>
</comment>
<comment type="catalytic activity">
    <reaction evidence="6">
        <text>hydrogencarbonate + H(+) = CO2 + H2O</text>
        <dbReference type="Rhea" id="RHEA:10748"/>
        <dbReference type="ChEBI" id="CHEBI:15377"/>
        <dbReference type="ChEBI" id="CHEBI:15378"/>
        <dbReference type="ChEBI" id="CHEBI:16526"/>
        <dbReference type="ChEBI" id="CHEBI:17544"/>
        <dbReference type="EC" id="4.2.1.1"/>
    </reaction>
</comment>
<comment type="cofactor">
    <cofactor evidence="3">
        <name>Zn(2+)</name>
        <dbReference type="ChEBI" id="CHEBI:29105"/>
    </cofactor>
</comment>
<comment type="subcellular location">
    <subcellularLocation>
        <location evidence="6">Cytoplasm</location>
    </subcellularLocation>
</comment>
<comment type="similarity">
    <text evidence="4">Belongs to the alpha-carbonic anhydrase family.</text>
</comment>